<gene>
    <name type="ordered locus">swp_2271</name>
</gene>
<evidence type="ECO:0000255" key="1">
    <source>
        <dbReference type="HAMAP-Rule" id="MF_00816"/>
    </source>
</evidence>
<name>Y2271_SHEPW</name>
<sequence>MAIQSKYSNTQVESLITELLAVLEKHQSPTDLSLMALGNCVTHLLQNKVPAEAREVVTEQFAKALSQSVKNS</sequence>
<dbReference type="EMBL" id="CP000472">
    <property type="protein sequence ID" value="ACJ29017.1"/>
    <property type="molecule type" value="Genomic_DNA"/>
</dbReference>
<dbReference type="RefSeq" id="WP_020912377.1">
    <property type="nucleotide sequence ID" value="NC_011566.1"/>
</dbReference>
<dbReference type="SMR" id="B8CNP8"/>
<dbReference type="STRING" id="225849.swp_2271"/>
<dbReference type="KEGG" id="swp:swp_2271"/>
<dbReference type="eggNOG" id="COG3082">
    <property type="taxonomic scope" value="Bacteria"/>
</dbReference>
<dbReference type="HOGENOM" id="CLU_175457_0_0_6"/>
<dbReference type="OrthoDB" id="5771474at2"/>
<dbReference type="Proteomes" id="UP000000753">
    <property type="component" value="Chromosome"/>
</dbReference>
<dbReference type="Gene3D" id="1.10.3390.10">
    <property type="entry name" value="YejL-like"/>
    <property type="match status" value="1"/>
</dbReference>
<dbReference type="HAMAP" id="MF_00816">
    <property type="entry name" value="UPF0352"/>
    <property type="match status" value="1"/>
</dbReference>
<dbReference type="InterPro" id="IPR009857">
    <property type="entry name" value="UPF0352"/>
</dbReference>
<dbReference type="InterPro" id="IPR023202">
    <property type="entry name" value="YejL_sf"/>
</dbReference>
<dbReference type="NCBIfam" id="NF010242">
    <property type="entry name" value="PRK13689.1"/>
    <property type="match status" value="1"/>
</dbReference>
<dbReference type="Pfam" id="PF07208">
    <property type="entry name" value="DUF1414"/>
    <property type="match status" value="1"/>
</dbReference>
<dbReference type="PIRSF" id="PIRSF006188">
    <property type="entry name" value="UCP006188"/>
    <property type="match status" value="1"/>
</dbReference>
<dbReference type="SUPFAM" id="SSF158651">
    <property type="entry name" value="YejL-like"/>
    <property type="match status" value="1"/>
</dbReference>
<reference key="1">
    <citation type="journal article" date="2008" name="PLoS ONE">
        <title>Environmental adaptation: genomic analysis of the piezotolerant and psychrotolerant deep-sea iron reducing bacterium Shewanella piezotolerans WP3.</title>
        <authorList>
            <person name="Wang F."/>
            <person name="Wang J."/>
            <person name="Jian H."/>
            <person name="Zhang B."/>
            <person name="Li S."/>
            <person name="Wang F."/>
            <person name="Zeng X."/>
            <person name="Gao L."/>
            <person name="Bartlett D.H."/>
            <person name="Yu J."/>
            <person name="Hu S."/>
            <person name="Xiao X."/>
        </authorList>
    </citation>
    <scope>NUCLEOTIDE SEQUENCE [LARGE SCALE GENOMIC DNA]</scope>
    <source>
        <strain>WP3 / JCM 13877</strain>
    </source>
</reference>
<protein>
    <recommendedName>
        <fullName evidence="1">UPF0352 protein swp_2271</fullName>
    </recommendedName>
</protein>
<comment type="similarity">
    <text evidence="1">Belongs to the UPF0352 family.</text>
</comment>
<feature type="chain" id="PRO_1000199601" description="UPF0352 protein swp_2271">
    <location>
        <begin position="1"/>
        <end position="72"/>
    </location>
</feature>
<accession>B8CNP8</accession>
<organism>
    <name type="scientific">Shewanella piezotolerans (strain WP3 / JCM 13877)</name>
    <dbReference type="NCBI Taxonomy" id="225849"/>
    <lineage>
        <taxon>Bacteria</taxon>
        <taxon>Pseudomonadati</taxon>
        <taxon>Pseudomonadota</taxon>
        <taxon>Gammaproteobacteria</taxon>
        <taxon>Alteromonadales</taxon>
        <taxon>Shewanellaceae</taxon>
        <taxon>Shewanella</taxon>
    </lineage>
</organism>
<proteinExistence type="inferred from homology"/>